<evidence type="ECO:0000255" key="1">
    <source>
        <dbReference type="HAMAP-Rule" id="MF_03017"/>
    </source>
</evidence>
<proteinExistence type="inferred from homology"/>
<name>KYNU_DICDI</name>
<feature type="chain" id="PRO_0000331482" description="Kynureninase">
    <location>
        <begin position="1"/>
        <end position="451"/>
    </location>
</feature>
<feature type="binding site" evidence="1">
    <location>
        <position position="131"/>
    </location>
    <ligand>
        <name>pyridoxal 5'-phosphate</name>
        <dbReference type="ChEBI" id="CHEBI:597326"/>
    </ligand>
</feature>
<feature type="binding site" evidence="1">
    <location>
        <position position="132"/>
    </location>
    <ligand>
        <name>pyridoxal 5'-phosphate</name>
        <dbReference type="ChEBI" id="CHEBI:597326"/>
    </ligand>
</feature>
<feature type="binding site" evidence="1">
    <location>
        <begin position="159"/>
        <end position="162"/>
    </location>
    <ligand>
        <name>pyridoxal 5'-phosphate</name>
        <dbReference type="ChEBI" id="CHEBI:597326"/>
    </ligand>
</feature>
<feature type="binding site" evidence="1">
    <location>
        <position position="215"/>
    </location>
    <ligand>
        <name>pyridoxal 5'-phosphate</name>
        <dbReference type="ChEBI" id="CHEBI:597326"/>
    </ligand>
</feature>
<feature type="binding site" evidence="1">
    <location>
        <position position="244"/>
    </location>
    <ligand>
        <name>pyridoxal 5'-phosphate</name>
        <dbReference type="ChEBI" id="CHEBI:597326"/>
    </ligand>
</feature>
<feature type="binding site" evidence="1">
    <location>
        <position position="247"/>
    </location>
    <ligand>
        <name>pyridoxal 5'-phosphate</name>
        <dbReference type="ChEBI" id="CHEBI:597326"/>
    </ligand>
</feature>
<feature type="binding site" evidence="1">
    <location>
        <position position="269"/>
    </location>
    <ligand>
        <name>pyridoxal 5'-phosphate</name>
        <dbReference type="ChEBI" id="CHEBI:597326"/>
    </ligand>
</feature>
<feature type="binding site" evidence="1">
    <location>
        <position position="303"/>
    </location>
    <ligand>
        <name>pyridoxal 5'-phosphate</name>
        <dbReference type="ChEBI" id="CHEBI:597326"/>
    </ligand>
</feature>
<feature type="binding site" evidence="1">
    <location>
        <position position="331"/>
    </location>
    <ligand>
        <name>pyridoxal 5'-phosphate</name>
        <dbReference type="ChEBI" id="CHEBI:597326"/>
    </ligand>
</feature>
<feature type="modified residue" description="N6-(pyridoxal phosphate)lysine" evidence="1">
    <location>
        <position position="270"/>
    </location>
</feature>
<gene>
    <name evidence="1" type="primary">kynu</name>
    <name type="ORF">DDB_G0284203</name>
</gene>
<accession>Q54Q04</accession>
<organism>
    <name type="scientific">Dictyostelium discoideum</name>
    <name type="common">Social amoeba</name>
    <dbReference type="NCBI Taxonomy" id="44689"/>
    <lineage>
        <taxon>Eukaryota</taxon>
        <taxon>Amoebozoa</taxon>
        <taxon>Evosea</taxon>
        <taxon>Eumycetozoa</taxon>
        <taxon>Dictyostelia</taxon>
        <taxon>Dictyosteliales</taxon>
        <taxon>Dictyosteliaceae</taxon>
        <taxon>Dictyostelium</taxon>
    </lineage>
</organism>
<comment type="function">
    <text evidence="1">Catalyzes the cleavage of L-kynurenine (L-Kyn) and L-3-hydroxykynurenine (L-3OHKyn) into anthranilic acid (AA) and 3-hydroxyanthranilic acid (3-OHAA), respectively.</text>
</comment>
<comment type="catalytic activity">
    <reaction evidence="1">
        <text>L-kynurenine + H2O = anthranilate + L-alanine + H(+)</text>
        <dbReference type="Rhea" id="RHEA:16813"/>
        <dbReference type="ChEBI" id="CHEBI:15377"/>
        <dbReference type="ChEBI" id="CHEBI:15378"/>
        <dbReference type="ChEBI" id="CHEBI:16567"/>
        <dbReference type="ChEBI" id="CHEBI:57959"/>
        <dbReference type="ChEBI" id="CHEBI:57972"/>
        <dbReference type="EC" id="3.7.1.3"/>
    </reaction>
</comment>
<comment type="catalytic activity">
    <reaction evidence="1">
        <text>3-hydroxy-L-kynurenine + H2O = 3-hydroxyanthranilate + L-alanine + H(+)</text>
        <dbReference type="Rhea" id="RHEA:25143"/>
        <dbReference type="ChEBI" id="CHEBI:15377"/>
        <dbReference type="ChEBI" id="CHEBI:15378"/>
        <dbReference type="ChEBI" id="CHEBI:36559"/>
        <dbReference type="ChEBI" id="CHEBI:57972"/>
        <dbReference type="ChEBI" id="CHEBI:58125"/>
        <dbReference type="EC" id="3.7.1.3"/>
    </reaction>
</comment>
<comment type="cofactor">
    <cofactor evidence="1">
        <name>pyridoxal 5'-phosphate</name>
        <dbReference type="ChEBI" id="CHEBI:597326"/>
    </cofactor>
</comment>
<comment type="pathway">
    <text evidence="1">Amino-acid degradation; L-kynurenine degradation; L-alanine and anthranilate from L-kynurenine: step 1/1.</text>
</comment>
<comment type="pathway">
    <text evidence="1">Cofactor biosynthesis; NAD(+) biosynthesis; quinolinate from L-kynurenine: step 2/3.</text>
</comment>
<comment type="subunit">
    <text evidence="1">Homodimer.</text>
</comment>
<comment type="subcellular location">
    <subcellularLocation>
        <location evidence="1">Cytoplasm</location>
    </subcellularLocation>
</comment>
<comment type="similarity">
    <text evidence="1">Belongs to the kynureninase family.</text>
</comment>
<protein>
    <recommendedName>
        <fullName evidence="1">Kynureninase</fullName>
        <ecNumber evidence="1">3.7.1.3</ecNumber>
    </recommendedName>
    <alternativeName>
        <fullName evidence="1">L-kynurenine hydrolase</fullName>
    </alternativeName>
</protein>
<dbReference type="EC" id="3.7.1.3" evidence="1"/>
<dbReference type="EMBL" id="AAFI02000064">
    <property type="protein sequence ID" value="EAL65290.1"/>
    <property type="molecule type" value="Genomic_DNA"/>
</dbReference>
<dbReference type="RefSeq" id="XP_638641.1">
    <property type="nucleotide sequence ID" value="XM_633549.1"/>
</dbReference>
<dbReference type="SMR" id="Q54Q04"/>
<dbReference type="FunCoup" id="Q54Q04">
    <property type="interactions" value="206"/>
</dbReference>
<dbReference type="STRING" id="44689.Q54Q04"/>
<dbReference type="PaxDb" id="44689-DDB0231361"/>
<dbReference type="EnsemblProtists" id="EAL65290">
    <property type="protein sequence ID" value="EAL65290"/>
    <property type="gene ID" value="DDB_G0284203"/>
</dbReference>
<dbReference type="GeneID" id="8624472"/>
<dbReference type="KEGG" id="ddi:DDB_G0284203"/>
<dbReference type="dictyBase" id="DDB_G0284203">
    <property type="gene designation" value="kynu"/>
</dbReference>
<dbReference type="VEuPathDB" id="AmoebaDB:DDB_G0284203"/>
<dbReference type="eggNOG" id="KOG3846">
    <property type="taxonomic scope" value="Eukaryota"/>
</dbReference>
<dbReference type="HOGENOM" id="CLU_003433_4_0_1"/>
<dbReference type="InParanoid" id="Q54Q04"/>
<dbReference type="OMA" id="LPGWNSH"/>
<dbReference type="PhylomeDB" id="Q54Q04"/>
<dbReference type="Reactome" id="R-DDI-71240">
    <property type="pathway name" value="Tryptophan catabolism"/>
</dbReference>
<dbReference type="UniPathway" id="UPA00253">
    <property type="reaction ID" value="UER00329"/>
</dbReference>
<dbReference type="UniPathway" id="UPA00334">
    <property type="reaction ID" value="UER00455"/>
</dbReference>
<dbReference type="PRO" id="PR:Q54Q04"/>
<dbReference type="Proteomes" id="UP000002195">
    <property type="component" value="Chromosome 4"/>
</dbReference>
<dbReference type="GO" id="GO:0005737">
    <property type="term" value="C:cytoplasm"/>
    <property type="evidence" value="ECO:0000318"/>
    <property type="project" value="GO_Central"/>
</dbReference>
<dbReference type="GO" id="GO:0030429">
    <property type="term" value="F:kynureninase activity"/>
    <property type="evidence" value="ECO:0000318"/>
    <property type="project" value="GO_Central"/>
</dbReference>
<dbReference type="GO" id="GO:0030170">
    <property type="term" value="F:pyridoxal phosphate binding"/>
    <property type="evidence" value="ECO:0007669"/>
    <property type="project" value="UniProtKB-UniRule"/>
</dbReference>
<dbReference type="GO" id="GO:0034354">
    <property type="term" value="P:'de novo' NAD biosynthetic process from L-tryptophan"/>
    <property type="evidence" value="ECO:0007669"/>
    <property type="project" value="UniProtKB-UniRule"/>
</dbReference>
<dbReference type="GO" id="GO:0043420">
    <property type="term" value="P:anthranilate metabolic process"/>
    <property type="evidence" value="ECO:0000318"/>
    <property type="project" value="GO_Central"/>
</dbReference>
<dbReference type="GO" id="GO:0097053">
    <property type="term" value="P:L-kynurenine catabolic process"/>
    <property type="evidence" value="ECO:0007669"/>
    <property type="project" value="UniProtKB-UniRule"/>
</dbReference>
<dbReference type="GO" id="GO:0019441">
    <property type="term" value="P:L-tryptophan catabolic process to kynurenine"/>
    <property type="evidence" value="ECO:0000318"/>
    <property type="project" value="GO_Central"/>
</dbReference>
<dbReference type="GO" id="GO:0019805">
    <property type="term" value="P:quinolinate biosynthetic process"/>
    <property type="evidence" value="ECO:0007669"/>
    <property type="project" value="UniProtKB-UniRule"/>
</dbReference>
<dbReference type="FunFam" id="3.40.640.10:FF:000031">
    <property type="entry name" value="Kynureninase"/>
    <property type="match status" value="1"/>
</dbReference>
<dbReference type="Gene3D" id="3.90.1150.10">
    <property type="entry name" value="Aspartate Aminotransferase, domain 1"/>
    <property type="match status" value="1"/>
</dbReference>
<dbReference type="Gene3D" id="3.40.640.10">
    <property type="entry name" value="Type I PLP-dependent aspartate aminotransferase-like (Major domain)"/>
    <property type="match status" value="1"/>
</dbReference>
<dbReference type="HAMAP" id="MF_01970">
    <property type="entry name" value="Kynureninase"/>
    <property type="match status" value="1"/>
</dbReference>
<dbReference type="InterPro" id="IPR010111">
    <property type="entry name" value="Kynureninase"/>
</dbReference>
<dbReference type="InterPro" id="IPR015424">
    <property type="entry name" value="PyrdxlP-dep_Trfase"/>
</dbReference>
<dbReference type="InterPro" id="IPR015421">
    <property type="entry name" value="PyrdxlP-dep_Trfase_major"/>
</dbReference>
<dbReference type="InterPro" id="IPR015422">
    <property type="entry name" value="PyrdxlP-dep_Trfase_small"/>
</dbReference>
<dbReference type="NCBIfam" id="TIGR01814">
    <property type="entry name" value="kynureninase"/>
    <property type="match status" value="1"/>
</dbReference>
<dbReference type="PANTHER" id="PTHR14084">
    <property type="entry name" value="KYNURENINASE"/>
    <property type="match status" value="1"/>
</dbReference>
<dbReference type="PANTHER" id="PTHR14084:SF0">
    <property type="entry name" value="KYNURENINASE"/>
    <property type="match status" value="1"/>
</dbReference>
<dbReference type="Pfam" id="PF22580">
    <property type="entry name" value="KYNU_C"/>
    <property type="match status" value="1"/>
</dbReference>
<dbReference type="PIRSF" id="PIRSF038800">
    <property type="entry name" value="KYNU"/>
    <property type="match status" value="1"/>
</dbReference>
<dbReference type="SUPFAM" id="SSF53383">
    <property type="entry name" value="PLP-dependent transferases"/>
    <property type="match status" value="1"/>
</dbReference>
<reference key="1">
    <citation type="journal article" date="2005" name="Nature">
        <title>The genome of the social amoeba Dictyostelium discoideum.</title>
        <authorList>
            <person name="Eichinger L."/>
            <person name="Pachebat J.A."/>
            <person name="Gloeckner G."/>
            <person name="Rajandream M.A."/>
            <person name="Sucgang R."/>
            <person name="Berriman M."/>
            <person name="Song J."/>
            <person name="Olsen R."/>
            <person name="Szafranski K."/>
            <person name="Xu Q."/>
            <person name="Tunggal B."/>
            <person name="Kummerfeld S."/>
            <person name="Madera M."/>
            <person name="Konfortov B.A."/>
            <person name="Rivero F."/>
            <person name="Bankier A.T."/>
            <person name="Lehmann R."/>
            <person name="Hamlin N."/>
            <person name="Davies R."/>
            <person name="Gaudet P."/>
            <person name="Fey P."/>
            <person name="Pilcher K."/>
            <person name="Chen G."/>
            <person name="Saunders D."/>
            <person name="Sodergren E.J."/>
            <person name="Davis P."/>
            <person name="Kerhornou A."/>
            <person name="Nie X."/>
            <person name="Hall N."/>
            <person name="Anjard C."/>
            <person name="Hemphill L."/>
            <person name="Bason N."/>
            <person name="Farbrother P."/>
            <person name="Desany B."/>
            <person name="Just E."/>
            <person name="Morio T."/>
            <person name="Rost R."/>
            <person name="Churcher C.M."/>
            <person name="Cooper J."/>
            <person name="Haydock S."/>
            <person name="van Driessche N."/>
            <person name="Cronin A."/>
            <person name="Goodhead I."/>
            <person name="Muzny D.M."/>
            <person name="Mourier T."/>
            <person name="Pain A."/>
            <person name="Lu M."/>
            <person name="Harper D."/>
            <person name="Lindsay R."/>
            <person name="Hauser H."/>
            <person name="James K.D."/>
            <person name="Quiles M."/>
            <person name="Madan Babu M."/>
            <person name="Saito T."/>
            <person name="Buchrieser C."/>
            <person name="Wardroper A."/>
            <person name="Felder M."/>
            <person name="Thangavelu M."/>
            <person name="Johnson D."/>
            <person name="Knights A."/>
            <person name="Loulseged H."/>
            <person name="Mungall K.L."/>
            <person name="Oliver K."/>
            <person name="Price C."/>
            <person name="Quail M.A."/>
            <person name="Urushihara H."/>
            <person name="Hernandez J."/>
            <person name="Rabbinowitsch E."/>
            <person name="Steffen D."/>
            <person name="Sanders M."/>
            <person name="Ma J."/>
            <person name="Kohara Y."/>
            <person name="Sharp S."/>
            <person name="Simmonds M.N."/>
            <person name="Spiegler S."/>
            <person name="Tivey A."/>
            <person name="Sugano S."/>
            <person name="White B."/>
            <person name="Walker D."/>
            <person name="Woodward J.R."/>
            <person name="Winckler T."/>
            <person name="Tanaka Y."/>
            <person name="Shaulsky G."/>
            <person name="Schleicher M."/>
            <person name="Weinstock G.M."/>
            <person name="Rosenthal A."/>
            <person name="Cox E.C."/>
            <person name="Chisholm R.L."/>
            <person name="Gibbs R.A."/>
            <person name="Loomis W.F."/>
            <person name="Platzer M."/>
            <person name="Kay R.R."/>
            <person name="Williams J.G."/>
            <person name="Dear P.H."/>
            <person name="Noegel A.A."/>
            <person name="Barrell B.G."/>
            <person name="Kuspa A."/>
        </authorList>
    </citation>
    <scope>NUCLEOTIDE SEQUENCE [LARGE SCALE GENOMIC DNA]</scope>
    <source>
        <strain>AX4</strain>
    </source>
</reference>
<sequence>MDKFFEYIKNQNLSLEDEKLADKLDQLDQLSSIKEEFYFPITKDIATDLSRVKDEDLDKPVIYLTGNSLGLQPKEIEKQLVCNYLNDWRKYGVEGHHKGDHPFIHIDEEIQASLSKIVGALPSEVCPMNSLSTNIHVLLSNFYKPTQTRHKIIIEYGAFPSDLYVTESQIRHNSFNPETSLIKIKPRDGEYTLRTDDIINVLKEHGDSVAVVMLSGIQYFTGQFFDMKKITEVGHEIGAIVGWDLAHAAGNVELSLHDWNVDFACWCTYKYLNSGPGCIAGIFVHSKHTESFNLSTDSRLLGWFGNKLSNRFQKEKEFVAEDGALGFRMSNPSVADCTALRASLSVFEKAGGIKKLAEKSTIITGYLEYLLTHKLKTTDVQIITPSEANQRGSQLSLLIKGIKASQLKVNLSNSGIVCDVRDPDVIRVAPAPLYTSFNDVKYFIQKLNENM</sequence>
<keyword id="KW-0963">Cytoplasm</keyword>
<keyword id="KW-0378">Hydrolase</keyword>
<keyword id="KW-0662">Pyridine nucleotide biosynthesis</keyword>
<keyword id="KW-0663">Pyridoxal phosphate</keyword>
<keyword id="KW-1185">Reference proteome</keyword>